<organism>
    <name type="scientific">Buchnera aphidicola subsp. Acyrthosiphon pisum (strain 5A)</name>
    <dbReference type="NCBI Taxonomy" id="563178"/>
    <lineage>
        <taxon>Bacteria</taxon>
        <taxon>Pseudomonadati</taxon>
        <taxon>Pseudomonadota</taxon>
        <taxon>Gammaproteobacteria</taxon>
        <taxon>Enterobacterales</taxon>
        <taxon>Erwiniaceae</taxon>
        <taxon>Buchnera</taxon>
    </lineage>
</organism>
<evidence type="ECO:0000255" key="1">
    <source>
        <dbReference type="HAMAP-Rule" id="MF_00079"/>
    </source>
</evidence>
<reference key="1">
    <citation type="journal article" date="2009" name="Science">
        <title>The dynamics and time scale of ongoing genomic erosion in symbiotic bacteria.</title>
        <authorList>
            <person name="Moran N.A."/>
            <person name="McLaughlin H.J."/>
            <person name="Sorek R."/>
        </authorList>
    </citation>
    <scope>NUCLEOTIDE SEQUENCE [LARGE SCALE GENOMIC DNA]</scope>
    <source>
        <strain>5A</strain>
    </source>
</reference>
<sequence length="299" mass="33416">MFENNRVRIAMQKTGRLSKDSIRLLTSCGVKINLKQQKLIAFAENMPIDVMLVRDDDIPGLVMDGVVDLGIVGENVLEEELLKRKSQKSECSYITLRRLDFGVCRLSLALPVNTIYTNITCLKNIRIATSYPHLLKKYLDEKNISFKSCMLNGSVEVAPRAGLADAICDLVSTGATLEANGLREVQVVYHSHACLICKTGNINSIKKEFINKLMTRIKGVIKARESKYIMLHAPIKQLEAVISLLHGAERPTILKLAGDDNRVAMHMVSSETLFWETMEKLKLLGASSILVLPIEKMME</sequence>
<dbReference type="EC" id="2.4.2.17" evidence="1"/>
<dbReference type="EMBL" id="CP001161">
    <property type="protein sequence ID" value="ACL30473.1"/>
    <property type="molecule type" value="Genomic_DNA"/>
</dbReference>
<dbReference type="RefSeq" id="WP_009874054.1">
    <property type="nucleotide sequence ID" value="NC_011833.1"/>
</dbReference>
<dbReference type="SMR" id="B8D8Q1"/>
<dbReference type="KEGG" id="bap:BUAP5A_097"/>
<dbReference type="HOGENOM" id="CLU_038115_1_0_6"/>
<dbReference type="OrthoDB" id="9801867at2"/>
<dbReference type="UniPathway" id="UPA00031">
    <property type="reaction ID" value="UER00006"/>
</dbReference>
<dbReference type="Proteomes" id="UP000006904">
    <property type="component" value="Chromosome"/>
</dbReference>
<dbReference type="GO" id="GO:0005737">
    <property type="term" value="C:cytoplasm"/>
    <property type="evidence" value="ECO:0007669"/>
    <property type="project" value="UniProtKB-SubCell"/>
</dbReference>
<dbReference type="GO" id="GO:0005524">
    <property type="term" value="F:ATP binding"/>
    <property type="evidence" value="ECO:0007669"/>
    <property type="project" value="UniProtKB-KW"/>
</dbReference>
<dbReference type="GO" id="GO:0003879">
    <property type="term" value="F:ATP phosphoribosyltransferase activity"/>
    <property type="evidence" value="ECO:0007669"/>
    <property type="project" value="UniProtKB-UniRule"/>
</dbReference>
<dbReference type="GO" id="GO:0000287">
    <property type="term" value="F:magnesium ion binding"/>
    <property type="evidence" value="ECO:0007669"/>
    <property type="project" value="UniProtKB-UniRule"/>
</dbReference>
<dbReference type="GO" id="GO:0000105">
    <property type="term" value="P:L-histidine biosynthetic process"/>
    <property type="evidence" value="ECO:0007669"/>
    <property type="project" value="UniProtKB-UniRule"/>
</dbReference>
<dbReference type="FunFam" id="3.30.70.120:FF:000002">
    <property type="entry name" value="ATP phosphoribosyltransferase"/>
    <property type="match status" value="1"/>
</dbReference>
<dbReference type="FunFam" id="3.40.190.10:FF:000008">
    <property type="entry name" value="ATP phosphoribosyltransferase"/>
    <property type="match status" value="1"/>
</dbReference>
<dbReference type="Gene3D" id="3.30.70.120">
    <property type="match status" value="1"/>
</dbReference>
<dbReference type="Gene3D" id="3.40.190.10">
    <property type="entry name" value="Periplasmic binding protein-like II"/>
    <property type="match status" value="2"/>
</dbReference>
<dbReference type="HAMAP" id="MF_00079">
    <property type="entry name" value="HisG_Long"/>
    <property type="match status" value="1"/>
</dbReference>
<dbReference type="InterPro" id="IPR020621">
    <property type="entry name" value="ATP-PRT_HisG_long"/>
</dbReference>
<dbReference type="InterPro" id="IPR013820">
    <property type="entry name" value="ATP_PRibTrfase_cat"/>
</dbReference>
<dbReference type="InterPro" id="IPR018198">
    <property type="entry name" value="ATP_PRibTrfase_CS"/>
</dbReference>
<dbReference type="InterPro" id="IPR001348">
    <property type="entry name" value="ATP_PRibTrfase_HisG"/>
</dbReference>
<dbReference type="InterPro" id="IPR013115">
    <property type="entry name" value="HisG_C"/>
</dbReference>
<dbReference type="InterPro" id="IPR011322">
    <property type="entry name" value="N-reg_PII-like_a/b"/>
</dbReference>
<dbReference type="InterPro" id="IPR015867">
    <property type="entry name" value="N-reg_PII/ATP_PRibTrfase_C"/>
</dbReference>
<dbReference type="NCBIfam" id="TIGR00070">
    <property type="entry name" value="hisG"/>
    <property type="match status" value="1"/>
</dbReference>
<dbReference type="NCBIfam" id="TIGR03455">
    <property type="entry name" value="HisG_C-term"/>
    <property type="match status" value="1"/>
</dbReference>
<dbReference type="PANTHER" id="PTHR21403:SF8">
    <property type="entry name" value="ATP PHOSPHORIBOSYLTRANSFERASE"/>
    <property type="match status" value="1"/>
</dbReference>
<dbReference type="PANTHER" id="PTHR21403">
    <property type="entry name" value="ATP PHOSPHORIBOSYLTRANSFERASE ATP-PRTASE"/>
    <property type="match status" value="1"/>
</dbReference>
<dbReference type="Pfam" id="PF01634">
    <property type="entry name" value="HisG"/>
    <property type="match status" value="1"/>
</dbReference>
<dbReference type="Pfam" id="PF08029">
    <property type="entry name" value="HisG_C"/>
    <property type="match status" value="1"/>
</dbReference>
<dbReference type="SUPFAM" id="SSF54913">
    <property type="entry name" value="GlnB-like"/>
    <property type="match status" value="1"/>
</dbReference>
<dbReference type="SUPFAM" id="SSF53850">
    <property type="entry name" value="Periplasmic binding protein-like II"/>
    <property type="match status" value="1"/>
</dbReference>
<dbReference type="PROSITE" id="PS01316">
    <property type="entry name" value="ATP_P_PHORIBOSYLTR"/>
    <property type="match status" value="1"/>
</dbReference>
<protein>
    <recommendedName>
        <fullName evidence="1">ATP phosphoribosyltransferase</fullName>
        <shortName evidence="1">ATP-PRT</shortName>
        <shortName evidence="1">ATP-PRTase</shortName>
        <ecNumber evidence="1">2.4.2.17</ecNumber>
    </recommendedName>
</protein>
<proteinExistence type="inferred from homology"/>
<keyword id="KW-0028">Amino-acid biosynthesis</keyword>
<keyword id="KW-0067">ATP-binding</keyword>
<keyword id="KW-0963">Cytoplasm</keyword>
<keyword id="KW-0328">Glycosyltransferase</keyword>
<keyword id="KW-0368">Histidine biosynthesis</keyword>
<keyword id="KW-0460">Magnesium</keyword>
<keyword id="KW-0479">Metal-binding</keyword>
<keyword id="KW-0547">Nucleotide-binding</keyword>
<keyword id="KW-0808">Transferase</keyword>
<comment type="function">
    <text evidence="1">Catalyzes the condensation of ATP and 5-phosphoribose 1-diphosphate to form N'-(5'-phosphoribosyl)-ATP (PR-ATP). Has a crucial role in the pathway because the rate of histidine biosynthesis seems to be controlled primarily by regulation of HisG enzymatic activity.</text>
</comment>
<comment type="catalytic activity">
    <reaction evidence="1">
        <text>1-(5-phospho-beta-D-ribosyl)-ATP + diphosphate = 5-phospho-alpha-D-ribose 1-diphosphate + ATP</text>
        <dbReference type="Rhea" id="RHEA:18473"/>
        <dbReference type="ChEBI" id="CHEBI:30616"/>
        <dbReference type="ChEBI" id="CHEBI:33019"/>
        <dbReference type="ChEBI" id="CHEBI:58017"/>
        <dbReference type="ChEBI" id="CHEBI:73183"/>
        <dbReference type="EC" id="2.4.2.17"/>
    </reaction>
</comment>
<comment type="cofactor">
    <cofactor evidence="1">
        <name>Mg(2+)</name>
        <dbReference type="ChEBI" id="CHEBI:18420"/>
    </cofactor>
</comment>
<comment type="activity regulation">
    <text evidence="1">Feedback inhibited by histidine.</text>
</comment>
<comment type="pathway">
    <text evidence="1">Amino-acid biosynthesis; L-histidine biosynthesis; L-histidine from 5-phospho-alpha-D-ribose 1-diphosphate: step 1/9.</text>
</comment>
<comment type="subunit">
    <text evidence="1">Equilibrium between an active dimeric form, an inactive hexameric form and higher aggregates. Interconversion between the various forms is largely reversible and is influenced by the natural substrates and inhibitors of the enzyme.</text>
</comment>
<comment type="subcellular location">
    <subcellularLocation>
        <location evidence="1">Cytoplasm</location>
    </subcellularLocation>
</comment>
<comment type="similarity">
    <text evidence="1">Belongs to the ATP phosphoribosyltransferase family. Long subfamily.</text>
</comment>
<feature type="chain" id="PRO_1000118245" description="ATP phosphoribosyltransferase">
    <location>
        <begin position="1"/>
        <end position="299"/>
    </location>
</feature>
<gene>
    <name evidence="1" type="primary">hisG</name>
    <name type="ordered locus">BUAP5A_097</name>
</gene>
<accession>B8D8Q1</accession>
<name>HIS1_BUCA5</name>